<dbReference type="EMBL" id="M37785">
    <property type="protein sequence ID" value="AAA48662.1"/>
    <property type="molecule type" value="mRNA"/>
</dbReference>
<dbReference type="PIR" id="A41264">
    <property type="entry name" value="A41264"/>
</dbReference>
<dbReference type="RefSeq" id="NP_990842.1">
    <property type="nucleotide sequence ID" value="NM_205511.1"/>
</dbReference>
<dbReference type="SMR" id="P28568"/>
<dbReference type="FunCoup" id="P28568">
    <property type="interactions" value="42"/>
</dbReference>
<dbReference type="STRING" id="9031.ENSGALP00000036432"/>
<dbReference type="GlyCosmos" id="P28568">
    <property type="glycosylation" value="1 site, No reported glycans"/>
</dbReference>
<dbReference type="GlyGen" id="P28568">
    <property type="glycosylation" value="1 site"/>
</dbReference>
<dbReference type="PaxDb" id="9031-ENSGALP00000036432"/>
<dbReference type="GeneID" id="396517"/>
<dbReference type="KEGG" id="gga:396517"/>
<dbReference type="CTD" id="144195"/>
<dbReference type="VEuPathDB" id="HostDB:geneid_396517"/>
<dbReference type="eggNOG" id="KOG0569">
    <property type="taxonomic scope" value="Eukaryota"/>
</dbReference>
<dbReference type="InParanoid" id="P28568"/>
<dbReference type="OrthoDB" id="4540492at2759"/>
<dbReference type="PhylomeDB" id="P28568"/>
<dbReference type="Reactome" id="R-GGA-352832">
    <property type="pathway name" value="Glucose transport"/>
</dbReference>
<dbReference type="PRO" id="PR:P28568"/>
<dbReference type="Proteomes" id="UP000000539">
    <property type="component" value="Unassembled WGS sequence"/>
</dbReference>
<dbReference type="GO" id="GO:0042995">
    <property type="term" value="C:cell projection"/>
    <property type="evidence" value="ECO:0007669"/>
    <property type="project" value="UniProtKB-SubCell"/>
</dbReference>
<dbReference type="GO" id="GO:0005615">
    <property type="term" value="C:extracellular space"/>
    <property type="evidence" value="ECO:0000314"/>
    <property type="project" value="AgBase"/>
</dbReference>
<dbReference type="GO" id="GO:0016020">
    <property type="term" value="C:membrane"/>
    <property type="evidence" value="ECO:0000250"/>
    <property type="project" value="UniProtKB"/>
</dbReference>
<dbReference type="GO" id="GO:0043204">
    <property type="term" value="C:perikaryon"/>
    <property type="evidence" value="ECO:0007669"/>
    <property type="project" value="UniProtKB-SubCell"/>
</dbReference>
<dbReference type="GO" id="GO:0005886">
    <property type="term" value="C:plasma membrane"/>
    <property type="evidence" value="ECO:0000250"/>
    <property type="project" value="UniProtKB"/>
</dbReference>
<dbReference type="GO" id="GO:0005536">
    <property type="term" value="F:D-glucose binding"/>
    <property type="evidence" value="ECO:0000250"/>
    <property type="project" value="UniProtKB"/>
</dbReference>
<dbReference type="GO" id="GO:0055056">
    <property type="term" value="F:D-glucose transmembrane transporter activity"/>
    <property type="evidence" value="ECO:0000250"/>
    <property type="project" value="UniProtKB"/>
</dbReference>
<dbReference type="GO" id="GO:0005354">
    <property type="term" value="F:galactose transmembrane transporter activity"/>
    <property type="evidence" value="ECO:0000250"/>
    <property type="project" value="UniProtKB"/>
</dbReference>
<dbReference type="GO" id="GO:0046323">
    <property type="term" value="P:D-glucose import"/>
    <property type="evidence" value="ECO:0000318"/>
    <property type="project" value="GO_Central"/>
</dbReference>
<dbReference type="GO" id="GO:1904659">
    <property type="term" value="P:D-glucose transmembrane transport"/>
    <property type="evidence" value="ECO:0000250"/>
    <property type="project" value="UniProtKB"/>
</dbReference>
<dbReference type="GO" id="GO:0070837">
    <property type="term" value="P:dehydroascorbic acid transport"/>
    <property type="evidence" value="ECO:0000318"/>
    <property type="project" value="GO_Central"/>
</dbReference>
<dbReference type="GO" id="GO:0015757">
    <property type="term" value="P:galactose transmembrane transport"/>
    <property type="evidence" value="ECO:0000250"/>
    <property type="project" value="UniProtKB"/>
</dbReference>
<dbReference type="CDD" id="cd17431">
    <property type="entry name" value="MFS_GLUT_Class1"/>
    <property type="match status" value="1"/>
</dbReference>
<dbReference type="FunFam" id="1.20.1250.20:FF:000040">
    <property type="entry name" value="Solute carrier family 2, facilitated glucose transporter member 1"/>
    <property type="match status" value="1"/>
</dbReference>
<dbReference type="Gene3D" id="1.20.1250.20">
    <property type="entry name" value="MFS general substrate transporter like domains"/>
    <property type="match status" value="1"/>
</dbReference>
<dbReference type="InterPro" id="IPR002945">
    <property type="entry name" value="Glc_transpt_3"/>
</dbReference>
<dbReference type="InterPro" id="IPR045263">
    <property type="entry name" value="GLUT"/>
</dbReference>
<dbReference type="InterPro" id="IPR020846">
    <property type="entry name" value="MFS_dom"/>
</dbReference>
<dbReference type="InterPro" id="IPR005828">
    <property type="entry name" value="MFS_sugar_transport-like"/>
</dbReference>
<dbReference type="InterPro" id="IPR036259">
    <property type="entry name" value="MFS_trans_sf"/>
</dbReference>
<dbReference type="InterPro" id="IPR003663">
    <property type="entry name" value="Sugar/inositol_transpt"/>
</dbReference>
<dbReference type="InterPro" id="IPR005829">
    <property type="entry name" value="Sugar_transporter_CS"/>
</dbReference>
<dbReference type="NCBIfam" id="TIGR00879">
    <property type="entry name" value="SP"/>
    <property type="match status" value="1"/>
</dbReference>
<dbReference type="PANTHER" id="PTHR23503">
    <property type="entry name" value="SOLUTE CARRIER FAMILY 2"/>
    <property type="match status" value="1"/>
</dbReference>
<dbReference type="PANTHER" id="PTHR23503:SF99">
    <property type="entry name" value="SOLUTE CARRIER FAMILY 2, FACILITATED GLUCOSE TRANSPORTER MEMBER 3"/>
    <property type="match status" value="1"/>
</dbReference>
<dbReference type="Pfam" id="PF00083">
    <property type="entry name" value="Sugar_tr"/>
    <property type="match status" value="1"/>
</dbReference>
<dbReference type="PRINTS" id="PR01192">
    <property type="entry name" value="GLUCTRSPORT3"/>
</dbReference>
<dbReference type="PRINTS" id="PR00171">
    <property type="entry name" value="SUGRTRNSPORT"/>
</dbReference>
<dbReference type="SUPFAM" id="SSF103473">
    <property type="entry name" value="MFS general substrate transporter"/>
    <property type="match status" value="1"/>
</dbReference>
<dbReference type="PROSITE" id="PS50850">
    <property type="entry name" value="MFS"/>
    <property type="match status" value="1"/>
</dbReference>
<dbReference type="PROSITE" id="PS00216">
    <property type="entry name" value="SUGAR_TRANSPORT_1"/>
    <property type="match status" value="1"/>
</dbReference>
<dbReference type="PROSITE" id="PS00217">
    <property type="entry name" value="SUGAR_TRANSPORT_2"/>
    <property type="match status" value="1"/>
</dbReference>
<comment type="function">
    <text evidence="1 2">Facilitative glucose transporter. Can also mediate the uptake of various other monosaccharides across the cell membrane. Mediates the uptake of glucose, 2-deoxyglucose, galactose, mannose, xylose and fucose, and probably also dehydroascorbate. Does not mediate fructose transport. Required for mesendoderm differentiation (By similarity).</text>
</comment>
<comment type="catalytic activity">
    <reaction evidence="1">
        <text>D-glucose(out) = D-glucose(in)</text>
        <dbReference type="Rhea" id="RHEA:60376"/>
        <dbReference type="ChEBI" id="CHEBI:4167"/>
    </reaction>
</comment>
<comment type="catalytic activity">
    <reaction evidence="1">
        <text>D-galactose(in) = D-galactose(out)</text>
        <dbReference type="Rhea" id="RHEA:34915"/>
        <dbReference type="ChEBI" id="CHEBI:4139"/>
    </reaction>
</comment>
<comment type="activity regulation">
    <text evidence="1">Deoxyglucose transport is inhibited by D-glucose, D-galactose and maltose. Galactose transport is inhibited by D-glucose and maltose.</text>
</comment>
<comment type="subcellular location">
    <subcellularLocation>
        <location evidence="1">Cell membrane</location>
        <topology evidence="1">Multi-pass membrane protein</topology>
    </subcellularLocation>
    <subcellularLocation>
        <location evidence="3">Perikaryon</location>
    </subcellularLocation>
    <subcellularLocation>
        <location evidence="3">Cell projection</location>
    </subcellularLocation>
    <text evidence="3">Localized to densely spaced patches along neuronal processes.</text>
</comment>
<comment type="domain">
    <text evidence="1">Transport is mediated via a series of conformation changes, switching between a conformation where the substrate-binding cavity is accessible from the outside, and a another conformation where it is accessible from the cytoplasm.</text>
</comment>
<comment type="similarity">
    <text evidence="7">Belongs to the major facilitator superfamily. Sugar transporter (TC 2.A.1.1) family. Glucose transporter subfamily.</text>
</comment>
<sequence>MADKKKITASLIYAVSVAAIGSLQFGYNTGVINAPEKIIQAFYNRTLSQRSGETISPELLTSLWSLSVAIFSVGGMIGSFSVSLFFNRFGRRNSMLLVNVLAFAGGALMALSKIAKAVEMLIIGRFIIGLFCGLCTGFVPMYISEVSPTSLRGAFGTLNQLGIVVGILVAQIFGLEGIMGTEALWPLLLGFTIVPAVLQCVALLFCPESPRFLLINKMEEEKAQTVLQKLRGTQDVSQDISEMKEESAKMSQEKKATVLELFRSPNYRQPIIISITLQLSQQLSGINAVFYYSTGIFERAGITQPVYATIGAGVVNTVFTVVSLFLVERAGRRTLHLVGLGGMAVCAAVMTIALALKEKWIRYISIVATFGFVALFEIGPGPIPWFIVAELFSQGPRPAAMAVAGCSNWTSNFLVGMLFPYAEKLCGPYVFLIFLVFLLIFFIFTYFKVPETKGRTFEDISRGFEEQVETSSPSSPPIEKNPMVEMNSIEPDKEVA</sequence>
<keyword id="KW-1003">Cell membrane</keyword>
<keyword id="KW-0966">Cell projection</keyword>
<keyword id="KW-0325">Glycoprotein</keyword>
<keyword id="KW-0472">Membrane</keyword>
<keyword id="KW-1185">Reference proteome</keyword>
<keyword id="KW-0762">Sugar transport</keyword>
<keyword id="KW-0812">Transmembrane</keyword>
<keyword id="KW-1133">Transmembrane helix</keyword>
<keyword id="KW-0813">Transport</keyword>
<reference key="1">
    <citation type="journal article" date="1991" name="Mol. Cell. Biol.">
        <title>Differential regulation of glucose transporter isoforms by the src oncogene in chicken embryo fibroblasts.</title>
        <authorList>
            <person name="White M.K."/>
            <person name="Rall T.B."/>
            <person name="Weber M.J."/>
        </authorList>
    </citation>
    <scope>NUCLEOTIDE SEQUENCE [MRNA]</scope>
</reference>
<feature type="chain" id="PRO_0000050360" description="Solute carrier family 2, facilitated glucose transporter member 3">
    <location>
        <begin position="1"/>
        <end position="496"/>
    </location>
</feature>
<feature type="topological domain" description="Cytoplasmic" evidence="1">
    <location>
        <begin position="1"/>
        <end position="11"/>
    </location>
</feature>
<feature type="transmembrane region" description="Helical; Name=1" evidence="1 4">
    <location>
        <begin position="12"/>
        <end position="33"/>
    </location>
</feature>
<feature type="topological domain" description="Extracellular" evidence="1">
    <location>
        <begin position="34"/>
        <end position="65"/>
    </location>
</feature>
<feature type="transmembrane region" description="Helical; Name=2" evidence="1 4">
    <location>
        <begin position="66"/>
        <end position="86"/>
    </location>
</feature>
<feature type="topological domain" description="Cytoplasmic" evidence="1">
    <location>
        <begin position="87"/>
        <end position="91"/>
    </location>
</feature>
<feature type="transmembrane region" description="Helical; Name=3" evidence="1">
    <location>
        <begin position="92"/>
        <end position="112"/>
    </location>
</feature>
<feature type="topological domain" description="Extracellular" evidence="1">
    <location>
        <begin position="113"/>
        <end position="119"/>
    </location>
</feature>
<feature type="transmembrane region" description="Helical; Name=4" evidence="1 4">
    <location>
        <begin position="120"/>
        <end position="143"/>
    </location>
</feature>
<feature type="topological domain" description="Cytoplasmic" evidence="1">
    <location>
        <begin position="144"/>
        <end position="154"/>
    </location>
</feature>
<feature type="transmembrane region" description="Helical; Name=5" evidence="1 4">
    <location>
        <begin position="155"/>
        <end position="175"/>
    </location>
</feature>
<feature type="topological domain" description="Extracellular" evidence="1">
    <location>
        <begin position="176"/>
        <end position="184"/>
    </location>
</feature>
<feature type="transmembrane region" description="Helical; Name=6" evidence="1 4">
    <location>
        <begin position="185"/>
        <end position="205"/>
    </location>
</feature>
<feature type="topological domain" description="Cytoplasmic" evidence="1">
    <location>
        <begin position="206"/>
        <end position="270"/>
    </location>
</feature>
<feature type="transmembrane region" description="Helical; Name=7" evidence="1 4">
    <location>
        <begin position="271"/>
        <end position="291"/>
    </location>
</feature>
<feature type="topological domain" description="Extracellular" evidence="1">
    <location>
        <begin position="292"/>
        <end position="305"/>
    </location>
</feature>
<feature type="transmembrane region" description="Helical; Name=8" evidence="1 4">
    <location>
        <begin position="306"/>
        <end position="326"/>
    </location>
</feature>
<feature type="topological domain" description="Cytoplasmic" evidence="1">
    <location>
        <begin position="327"/>
        <end position="332"/>
    </location>
</feature>
<feature type="transmembrane region" description="Helical; Name=9" evidence="1 4">
    <location>
        <begin position="333"/>
        <end position="353"/>
    </location>
</feature>
<feature type="topological domain" description="Extracellular" evidence="1">
    <location>
        <begin position="354"/>
        <end position="362"/>
    </location>
</feature>
<feature type="transmembrane region" description="Helical; Name=10" evidence="1 4">
    <location>
        <begin position="363"/>
        <end position="388"/>
    </location>
</feature>
<feature type="topological domain" description="Cytoplasmic" evidence="1">
    <location>
        <begin position="389"/>
        <end position="398"/>
    </location>
</feature>
<feature type="transmembrane region" description="Helical; Name=11" evidence="1 4">
    <location>
        <begin position="399"/>
        <end position="419"/>
    </location>
</feature>
<feature type="topological domain" description="Extracellular" evidence="1">
    <location>
        <begin position="420"/>
        <end position="428"/>
    </location>
</feature>
<feature type="transmembrane region" description="Helical; Name=12" evidence="1 4">
    <location>
        <begin position="429"/>
        <end position="449"/>
    </location>
</feature>
<feature type="topological domain" description="Cytoplasmic" evidence="1">
    <location>
        <begin position="450"/>
        <end position="496"/>
    </location>
</feature>
<feature type="region of interest" description="Important for selectivity against fructose" evidence="1">
    <location>
        <begin position="278"/>
        <end position="280"/>
    </location>
</feature>
<feature type="region of interest" description="Disordered" evidence="5">
    <location>
        <begin position="464"/>
        <end position="496"/>
    </location>
</feature>
<feature type="binding site" evidence="1">
    <location>
        <position position="160"/>
    </location>
    <ligand>
        <name>D-glucose</name>
        <dbReference type="ChEBI" id="CHEBI:4167"/>
    </ligand>
</feature>
<feature type="binding site" evidence="1">
    <location>
        <begin position="281"/>
        <end position="282"/>
    </location>
    <ligand>
        <name>D-glucose</name>
        <dbReference type="ChEBI" id="CHEBI:4167"/>
    </ligand>
</feature>
<feature type="binding site" evidence="1">
    <location>
        <position position="287"/>
    </location>
    <ligand>
        <name>D-glucose</name>
        <dbReference type="ChEBI" id="CHEBI:4167"/>
    </ligand>
</feature>
<feature type="binding site" evidence="1">
    <location>
        <position position="316"/>
    </location>
    <ligand>
        <name>D-glucose</name>
        <dbReference type="ChEBI" id="CHEBI:4167"/>
    </ligand>
</feature>
<feature type="binding site" evidence="1">
    <location>
        <position position="377"/>
    </location>
    <ligand>
        <name>D-glucose</name>
        <dbReference type="ChEBI" id="CHEBI:4167"/>
    </ligand>
</feature>
<feature type="binding site" evidence="1">
    <location>
        <position position="385"/>
    </location>
    <ligand>
        <name>D-glucose</name>
        <dbReference type="ChEBI" id="CHEBI:4167"/>
    </ligand>
</feature>
<feature type="glycosylation site" description="N-linked (GlcNAc...) asparagine" evidence="4">
    <location>
        <position position="44"/>
    </location>
</feature>
<evidence type="ECO:0000250" key="1">
    <source>
        <dbReference type="UniProtKB" id="P11169"/>
    </source>
</evidence>
<evidence type="ECO:0000250" key="2">
    <source>
        <dbReference type="UniProtKB" id="P32037"/>
    </source>
</evidence>
<evidence type="ECO:0000250" key="3">
    <source>
        <dbReference type="UniProtKB" id="Q07647"/>
    </source>
</evidence>
<evidence type="ECO:0000255" key="4"/>
<evidence type="ECO:0000256" key="5">
    <source>
        <dbReference type="SAM" id="MobiDB-lite"/>
    </source>
</evidence>
<evidence type="ECO:0000303" key="6">
    <source>
    </source>
</evidence>
<evidence type="ECO:0000305" key="7"/>
<gene>
    <name evidence="1" type="primary">SLC2A3</name>
    <name evidence="6" type="synonym">GLUT3</name>
</gene>
<organism>
    <name type="scientific">Gallus gallus</name>
    <name type="common">Chicken</name>
    <dbReference type="NCBI Taxonomy" id="9031"/>
    <lineage>
        <taxon>Eukaryota</taxon>
        <taxon>Metazoa</taxon>
        <taxon>Chordata</taxon>
        <taxon>Craniata</taxon>
        <taxon>Vertebrata</taxon>
        <taxon>Euteleostomi</taxon>
        <taxon>Archelosauria</taxon>
        <taxon>Archosauria</taxon>
        <taxon>Dinosauria</taxon>
        <taxon>Saurischia</taxon>
        <taxon>Theropoda</taxon>
        <taxon>Coelurosauria</taxon>
        <taxon>Aves</taxon>
        <taxon>Neognathae</taxon>
        <taxon>Galloanserae</taxon>
        <taxon>Galliformes</taxon>
        <taxon>Phasianidae</taxon>
        <taxon>Phasianinae</taxon>
        <taxon>Gallus</taxon>
    </lineage>
</organism>
<proteinExistence type="evidence at transcript level"/>
<name>GTR3_CHICK</name>
<protein>
    <recommendedName>
        <fullName evidence="7">Solute carrier family 2, facilitated glucose transporter member 3</fullName>
    </recommendedName>
    <alternativeName>
        <fullName evidence="6">CEF-GT3</fullName>
    </alternativeName>
    <alternativeName>
        <fullName evidence="6">Glucose transporter type 3</fullName>
        <shortName evidence="6">GLUT-3</shortName>
    </alternativeName>
</protein>
<accession>P28568</accession>